<comment type="subunit">
    <text evidence="1">Part of the 50S ribosomal subunit. Contacts protein L32.</text>
</comment>
<comment type="similarity">
    <text evidence="1">Belongs to the bacterial ribosomal protein bL17 family.</text>
</comment>
<gene>
    <name evidence="1" type="primary">rplQ</name>
    <name type="ordered locus">Bind_2040</name>
</gene>
<proteinExistence type="inferred from homology"/>
<sequence length="140" mass="15639">MYHGHAKRRFGRTHEHRKAMFANMSQALIKHEQIVTTLPKAKDLRPIVEKLVTLGKRGDLHARRQAIAQIKDVALVGKLFEVLGPRYKDRHGGYLRVLKAGFRYGDNAPMAVIEFVDRDVTAKGKDSGPVLNAAGEEEAA</sequence>
<organism>
    <name type="scientific">Beijerinckia indica subsp. indica (strain ATCC 9039 / DSM 1715 / NCIMB 8712)</name>
    <dbReference type="NCBI Taxonomy" id="395963"/>
    <lineage>
        <taxon>Bacteria</taxon>
        <taxon>Pseudomonadati</taxon>
        <taxon>Pseudomonadota</taxon>
        <taxon>Alphaproteobacteria</taxon>
        <taxon>Hyphomicrobiales</taxon>
        <taxon>Beijerinckiaceae</taxon>
        <taxon>Beijerinckia</taxon>
    </lineage>
</organism>
<protein>
    <recommendedName>
        <fullName evidence="1">Large ribosomal subunit protein bL17</fullName>
    </recommendedName>
    <alternativeName>
        <fullName evidence="2">50S ribosomal protein L17</fullName>
    </alternativeName>
</protein>
<dbReference type="EMBL" id="CP001016">
    <property type="protein sequence ID" value="ACB95662.1"/>
    <property type="molecule type" value="Genomic_DNA"/>
</dbReference>
<dbReference type="RefSeq" id="WP_012385018.1">
    <property type="nucleotide sequence ID" value="NC_010581.1"/>
</dbReference>
<dbReference type="SMR" id="B2IF97"/>
<dbReference type="STRING" id="395963.Bind_2040"/>
<dbReference type="KEGG" id="bid:Bind_2040"/>
<dbReference type="eggNOG" id="COG0203">
    <property type="taxonomic scope" value="Bacteria"/>
</dbReference>
<dbReference type="HOGENOM" id="CLU_074407_2_0_5"/>
<dbReference type="OrthoDB" id="9809073at2"/>
<dbReference type="Proteomes" id="UP000001695">
    <property type="component" value="Chromosome"/>
</dbReference>
<dbReference type="GO" id="GO:0022625">
    <property type="term" value="C:cytosolic large ribosomal subunit"/>
    <property type="evidence" value="ECO:0007669"/>
    <property type="project" value="TreeGrafter"/>
</dbReference>
<dbReference type="GO" id="GO:0003735">
    <property type="term" value="F:structural constituent of ribosome"/>
    <property type="evidence" value="ECO:0007669"/>
    <property type="project" value="InterPro"/>
</dbReference>
<dbReference type="GO" id="GO:0006412">
    <property type="term" value="P:translation"/>
    <property type="evidence" value="ECO:0007669"/>
    <property type="project" value="UniProtKB-UniRule"/>
</dbReference>
<dbReference type="FunFam" id="3.90.1030.10:FF:000001">
    <property type="entry name" value="50S ribosomal protein L17"/>
    <property type="match status" value="1"/>
</dbReference>
<dbReference type="Gene3D" id="3.90.1030.10">
    <property type="entry name" value="Ribosomal protein L17"/>
    <property type="match status" value="1"/>
</dbReference>
<dbReference type="HAMAP" id="MF_01368">
    <property type="entry name" value="Ribosomal_bL17"/>
    <property type="match status" value="1"/>
</dbReference>
<dbReference type="InterPro" id="IPR000456">
    <property type="entry name" value="Ribosomal_bL17"/>
</dbReference>
<dbReference type="InterPro" id="IPR047859">
    <property type="entry name" value="Ribosomal_bL17_CS"/>
</dbReference>
<dbReference type="InterPro" id="IPR036373">
    <property type="entry name" value="Ribosomal_bL17_sf"/>
</dbReference>
<dbReference type="NCBIfam" id="TIGR00059">
    <property type="entry name" value="L17"/>
    <property type="match status" value="1"/>
</dbReference>
<dbReference type="PANTHER" id="PTHR14413:SF16">
    <property type="entry name" value="LARGE RIBOSOMAL SUBUNIT PROTEIN BL17M"/>
    <property type="match status" value="1"/>
</dbReference>
<dbReference type="PANTHER" id="PTHR14413">
    <property type="entry name" value="RIBOSOMAL PROTEIN L17"/>
    <property type="match status" value="1"/>
</dbReference>
<dbReference type="Pfam" id="PF01196">
    <property type="entry name" value="Ribosomal_L17"/>
    <property type="match status" value="1"/>
</dbReference>
<dbReference type="SUPFAM" id="SSF64263">
    <property type="entry name" value="Prokaryotic ribosomal protein L17"/>
    <property type="match status" value="1"/>
</dbReference>
<dbReference type="PROSITE" id="PS01167">
    <property type="entry name" value="RIBOSOMAL_L17"/>
    <property type="match status" value="1"/>
</dbReference>
<feature type="chain" id="PRO_1000144379" description="Large ribosomal subunit protein bL17">
    <location>
        <begin position="1"/>
        <end position="140"/>
    </location>
</feature>
<evidence type="ECO:0000255" key="1">
    <source>
        <dbReference type="HAMAP-Rule" id="MF_01368"/>
    </source>
</evidence>
<evidence type="ECO:0000305" key="2"/>
<keyword id="KW-1185">Reference proteome</keyword>
<keyword id="KW-0687">Ribonucleoprotein</keyword>
<keyword id="KW-0689">Ribosomal protein</keyword>
<accession>B2IF97</accession>
<name>RL17_BEII9</name>
<reference key="1">
    <citation type="journal article" date="2010" name="J. Bacteriol.">
        <title>Complete genome sequence of Beijerinckia indica subsp. indica.</title>
        <authorList>
            <person name="Tamas I."/>
            <person name="Dedysh S.N."/>
            <person name="Liesack W."/>
            <person name="Stott M.B."/>
            <person name="Alam M."/>
            <person name="Murrell J.C."/>
            <person name="Dunfield P.F."/>
        </authorList>
    </citation>
    <scope>NUCLEOTIDE SEQUENCE [LARGE SCALE GENOMIC DNA]</scope>
    <source>
        <strain>ATCC 9039 / DSM 1715 / NCIMB 8712</strain>
    </source>
</reference>